<organism>
    <name type="scientific">Mycobacterium tuberculosis (strain CDC 1551 / Oshkosh)</name>
    <dbReference type="NCBI Taxonomy" id="83331"/>
    <lineage>
        <taxon>Bacteria</taxon>
        <taxon>Bacillati</taxon>
        <taxon>Actinomycetota</taxon>
        <taxon>Actinomycetes</taxon>
        <taxon>Mycobacteriales</taxon>
        <taxon>Mycobacteriaceae</taxon>
        <taxon>Mycobacterium</taxon>
        <taxon>Mycobacterium tuberculosis complex</taxon>
    </lineage>
</organism>
<gene>
    <name evidence="2" type="primary">fadD19</name>
    <name type="ordered locus">MT3616</name>
</gene>
<protein>
    <recommendedName>
        <fullName evidence="2">Medium/long-chain-fatty-acid--CoA/3-oxocholest-4-en-26-oate--CoA ligase</fullName>
        <shortName evidence="2">FACL</shortName>
        <ecNumber evidence="2">6.2.1.2</ecNumber>
        <ecNumber evidence="2">6.2.1.3</ecNumber>
        <ecNumber evidence="2">6.2.1.42</ecNumber>
    </recommendedName>
    <alternativeName>
        <fullName evidence="2">Acyl-CoA synthetase</fullName>
    </alternativeName>
    <alternativeName>
        <fullName evidence="2">Steroid-CoA ligase</fullName>
    </alternativeName>
    <alternativeName>
        <fullName evidence="2">Steroid-coenzyme A ligase</fullName>
    </alternativeName>
</protein>
<keyword id="KW-0067">ATP-binding</keyword>
<keyword id="KW-0153">Cholesterol metabolism</keyword>
<keyword id="KW-0276">Fatty acid metabolism</keyword>
<keyword id="KW-0436">Ligase</keyword>
<keyword id="KW-0443">Lipid metabolism</keyword>
<keyword id="KW-0547">Nucleotide-binding</keyword>
<keyword id="KW-1185">Reference proteome</keyword>
<keyword id="KW-0753">Steroid metabolism</keyword>
<keyword id="KW-1207">Sterol metabolism</keyword>
<reference key="1">
    <citation type="journal article" date="2002" name="J. Bacteriol.">
        <title>Whole-genome comparison of Mycobacterium tuberculosis clinical and laboratory strains.</title>
        <authorList>
            <person name="Fleischmann R.D."/>
            <person name="Alland D."/>
            <person name="Eisen J.A."/>
            <person name="Carpenter L."/>
            <person name="White O."/>
            <person name="Peterson J.D."/>
            <person name="DeBoy R.T."/>
            <person name="Dodson R.J."/>
            <person name="Gwinn M.L."/>
            <person name="Haft D.H."/>
            <person name="Hickey E.K."/>
            <person name="Kolonay J.F."/>
            <person name="Nelson W.C."/>
            <person name="Umayam L.A."/>
            <person name="Ermolaeva M.D."/>
            <person name="Salzberg S.L."/>
            <person name="Delcher A."/>
            <person name="Utterback T.R."/>
            <person name="Weidman J.F."/>
            <person name="Khouri H.M."/>
            <person name="Gill J."/>
            <person name="Mikula A."/>
            <person name="Bishai W."/>
            <person name="Jacobs W.R. Jr."/>
            <person name="Venter J.C."/>
            <person name="Fraser C.M."/>
        </authorList>
    </citation>
    <scope>NUCLEOTIDE SEQUENCE [LARGE SCALE GENOMIC DNA]</scope>
    <source>
        <strain>CDC 1551 / Oshkosh</strain>
    </source>
</reference>
<proteinExistence type="inferred from homology"/>
<accession>P9WQ50</accession>
<accession>L0TEC7</accession>
<accession>Q6MWW5</accession>
<accession>Q7D5D8</accession>
<feature type="chain" id="PRO_0000426837" description="Medium/long-chain-fatty-acid--CoA/3-oxocholest-4-en-26-oate--CoA ligase">
    <location>
        <begin position="1"/>
        <end position="548"/>
    </location>
</feature>
<feature type="region of interest" description="Disordered" evidence="3">
    <location>
        <begin position="520"/>
        <end position="548"/>
    </location>
</feature>
<feature type="compositionally biased region" description="Basic and acidic residues" evidence="3">
    <location>
        <begin position="520"/>
        <end position="541"/>
    </location>
</feature>
<feature type="binding site" evidence="1">
    <location>
        <begin position="174"/>
        <end position="182"/>
    </location>
    <ligand>
        <name>ATP</name>
        <dbReference type="ChEBI" id="CHEBI:30616"/>
    </ligand>
</feature>
<feature type="binding site" evidence="1">
    <location>
        <position position="415"/>
    </location>
    <ligand>
        <name>ATP</name>
        <dbReference type="ChEBI" id="CHEBI:30616"/>
    </ligand>
</feature>
<feature type="binding site" evidence="1">
    <location>
        <position position="430"/>
    </location>
    <ligand>
        <name>ATP</name>
        <dbReference type="ChEBI" id="CHEBI:30616"/>
    </ligand>
</feature>
<feature type="binding site" evidence="1">
    <location>
        <position position="521"/>
    </location>
    <ligand>
        <name>ATP</name>
        <dbReference type="ChEBI" id="CHEBI:30616"/>
    </ligand>
</feature>
<dbReference type="EC" id="6.2.1.2" evidence="2"/>
<dbReference type="EC" id="6.2.1.3" evidence="2"/>
<dbReference type="EC" id="6.2.1.42" evidence="2"/>
<dbReference type="EMBL" id="AE000516">
    <property type="protein sequence ID" value="AAK47976.1"/>
    <property type="molecule type" value="Genomic_DNA"/>
</dbReference>
<dbReference type="PIR" id="E70807">
    <property type="entry name" value="E70807"/>
</dbReference>
<dbReference type="RefSeq" id="WP_003901660.1">
    <property type="nucleotide sequence ID" value="NZ_KK341227.1"/>
</dbReference>
<dbReference type="SMR" id="P9WQ50"/>
<dbReference type="KEGG" id="mtc:MT3616"/>
<dbReference type="PATRIC" id="fig|83331.31.peg.3895"/>
<dbReference type="HOGENOM" id="CLU_000022_59_0_11"/>
<dbReference type="UniPathway" id="UPA00094"/>
<dbReference type="UniPathway" id="UPA00296"/>
<dbReference type="Proteomes" id="UP000001020">
    <property type="component" value="Chromosome"/>
</dbReference>
<dbReference type="GO" id="GO:0005524">
    <property type="term" value="F:ATP binding"/>
    <property type="evidence" value="ECO:0007669"/>
    <property type="project" value="UniProtKB-KW"/>
</dbReference>
<dbReference type="GO" id="GO:0004467">
    <property type="term" value="F:long-chain fatty acid-CoA ligase activity"/>
    <property type="evidence" value="ECO:0007669"/>
    <property type="project" value="UniProtKB-EC"/>
</dbReference>
<dbReference type="GO" id="GO:0031956">
    <property type="term" value="F:medium-chain fatty acid-CoA ligase activity"/>
    <property type="evidence" value="ECO:0007669"/>
    <property type="project" value="UniProtKB-EC"/>
</dbReference>
<dbReference type="GO" id="GO:0008203">
    <property type="term" value="P:cholesterol metabolic process"/>
    <property type="evidence" value="ECO:0007669"/>
    <property type="project" value="UniProtKB-UniPathway"/>
</dbReference>
<dbReference type="GO" id="GO:0006633">
    <property type="term" value="P:fatty acid biosynthetic process"/>
    <property type="evidence" value="ECO:0007669"/>
    <property type="project" value="UniProtKB-UniPathway"/>
</dbReference>
<dbReference type="CDD" id="cd05924">
    <property type="entry name" value="FACL_like_5"/>
    <property type="match status" value="1"/>
</dbReference>
<dbReference type="FunFam" id="3.40.50.12780:FF:000043">
    <property type="entry name" value="Acyl-CoA synthetase"/>
    <property type="match status" value="1"/>
</dbReference>
<dbReference type="FunFam" id="3.30.300.30:FF:000032">
    <property type="entry name" value="Fatty-acid-CoA ligase FadD19"/>
    <property type="match status" value="1"/>
</dbReference>
<dbReference type="Gene3D" id="3.30.300.30">
    <property type="match status" value="1"/>
</dbReference>
<dbReference type="Gene3D" id="3.40.50.12780">
    <property type="entry name" value="N-terminal domain of ligase-like"/>
    <property type="match status" value="1"/>
</dbReference>
<dbReference type="InterPro" id="IPR025110">
    <property type="entry name" value="AMP-bd_C"/>
</dbReference>
<dbReference type="InterPro" id="IPR045851">
    <property type="entry name" value="AMP-bd_C_sf"/>
</dbReference>
<dbReference type="InterPro" id="IPR020845">
    <property type="entry name" value="AMP-binding_CS"/>
</dbReference>
<dbReference type="InterPro" id="IPR000873">
    <property type="entry name" value="AMP-dep_synth/lig_dom"/>
</dbReference>
<dbReference type="InterPro" id="IPR042099">
    <property type="entry name" value="ANL_N_sf"/>
</dbReference>
<dbReference type="InterPro" id="IPR050237">
    <property type="entry name" value="ATP-dep_AMP-bd_enzyme"/>
</dbReference>
<dbReference type="NCBIfam" id="NF005863">
    <property type="entry name" value="PRK07798.1"/>
    <property type="match status" value="1"/>
</dbReference>
<dbReference type="PANTHER" id="PTHR43767">
    <property type="entry name" value="LONG-CHAIN-FATTY-ACID--COA LIGASE"/>
    <property type="match status" value="1"/>
</dbReference>
<dbReference type="PANTHER" id="PTHR43767:SF1">
    <property type="entry name" value="NONRIBOSOMAL PEPTIDE SYNTHASE PES1 (EUROFUNG)-RELATED"/>
    <property type="match status" value="1"/>
</dbReference>
<dbReference type="Pfam" id="PF00501">
    <property type="entry name" value="AMP-binding"/>
    <property type="match status" value="1"/>
</dbReference>
<dbReference type="Pfam" id="PF13193">
    <property type="entry name" value="AMP-binding_C"/>
    <property type="match status" value="1"/>
</dbReference>
<dbReference type="SUPFAM" id="SSF56801">
    <property type="entry name" value="Acetyl-CoA synthetase-like"/>
    <property type="match status" value="1"/>
</dbReference>
<dbReference type="PROSITE" id="PS00455">
    <property type="entry name" value="AMP_BINDING"/>
    <property type="match status" value="1"/>
</dbReference>
<sequence length="548" mass="59741">MAVALNIADLAEHAIDAVPDRVAVICGDEQLTYAQLEDKANRLAHHLIDQGVQKDDKVGLYCRNRIEIVIAMLGIVKAGAILVNVNFRYVEGELRYLFDNSDMVALVHERRYADRVANVLPDTPHVRTILVVEDGSDQDYRRYGGVEFYSAIAAGSPERDFGERSADAIYLLYTGGTTGFPKGVMWRHEDIYRVLFGGTDFATGEFVKDEYDLAKAAAANPPMIRYPIPPMIHGATQSATWMALFSGQTTVLAPEFNADEVWRTIHKHKVNLLFFTGDAMARPLVDALVKGNDYDLSSLFLLASTAALFSPSIKEKLLELLPNRVITDSIGSSETGFGGTSVVAAGQAHGGGPRVRIDHRTVVLDDDGNEVKPGSGMRGVIAKKGNIPVGYYKDEKKTAETFRTINGVRYAIPGDYAQVEEDGTVTMLGRGSVSINSGGEKVYPEEVEAALKGHPDVFDALVVGVPDPRYGQQVAAVVQARPGCRPSLAELDSFVRSEIAGYKVPRSLWFVDEVKRSPAGKPDYRWAKEQTEARPADDVHAGHVTSGG</sequence>
<evidence type="ECO:0000250" key="1"/>
<evidence type="ECO:0000250" key="2">
    <source>
        <dbReference type="UniProtKB" id="P9WQ51"/>
    </source>
</evidence>
<evidence type="ECO:0000256" key="3">
    <source>
        <dbReference type="SAM" id="MobiDB-lite"/>
    </source>
</evidence>
<evidence type="ECO:0000305" key="4"/>
<name>FAC19_MYCTO</name>
<comment type="function">
    <text evidence="2">Catalyzes the activation of medium/long-chain fatty acids as acyl-coenzyme A (acyl-CoA), which are then transferred to the multifunctional polyketide synthase (PKS) type III for further chain extension. Also involved in the degradation of cholesterol via the degradation of the side chains of C-24 branched-chain sterols. Catalyzes the ATP-dependent CoA thioesterification of the sterol 3-oxocholest-4-en-26-oate to yield 3-oxocholest-4-en-26-oyl-CoA.</text>
</comment>
<comment type="catalytic activity">
    <reaction evidence="2">
        <text>a medium-chain fatty acid + ATP + CoA = a medium-chain fatty acyl-CoA + AMP + diphosphate</text>
        <dbReference type="Rhea" id="RHEA:48340"/>
        <dbReference type="ChEBI" id="CHEBI:30616"/>
        <dbReference type="ChEBI" id="CHEBI:33019"/>
        <dbReference type="ChEBI" id="CHEBI:57287"/>
        <dbReference type="ChEBI" id="CHEBI:59558"/>
        <dbReference type="ChEBI" id="CHEBI:90546"/>
        <dbReference type="ChEBI" id="CHEBI:456215"/>
        <dbReference type="EC" id="6.2.1.2"/>
    </reaction>
</comment>
<comment type="catalytic activity">
    <reaction evidence="2">
        <text>a long-chain fatty acid + ATP + CoA = a long-chain fatty acyl-CoA + AMP + diphosphate</text>
        <dbReference type="Rhea" id="RHEA:15421"/>
        <dbReference type="ChEBI" id="CHEBI:30616"/>
        <dbReference type="ChEBI" id="CHEBI:33019"/>
        <dbReference type="ChEBI" id="CHEBI:57287"/>
        <dbReference type="ChEBI" id="CHEBI:57560"/>
        <dbReference type="ChEBI" id="CHEBI:83139"/>
        <dbReference type="ChEBI" id="CHEBI:456215"/>
        <dbReference type="EC" id="6.2.1.3"/>
    </reaction>
</comment>
<comment type="catalytic activity">
    <reaction evidence="2">
        <text>(25S)-3-oxocholest-4-en-26-oate + ATP + CoA = (25S)-3-oxocholest-4-en-26-oyl-CoA + AMP + diphosphate</text>
        <dbReference type="Rhea" id="RHEA:29291"/>
        <dbReference type="ChEBI" id="CHEBI:30616"/>
        <dbReference type="ChEBI" id="CHEBI:33019"/>
        <dbReference type="ChEBI" id="CHEBI:57287"/>
        <dbReference type="ChEBI" id="CHEBI:71541"/>
        <dbReference type="ChEBI" id="CHEBI:83819"/>
        <dbReference type="ChEBI" id="CHEBI:456215"/>
        <dbReference type="EC" id="6.2.1.42"/>
    </reaction>
</comment>
<comment type="pathway">
    <text evidence="2">Lipid metabolism; fatty acid biosynthesis.</text>
</comment>
<comment type="pathway">
    <text evidence="2">Steroid metabolism; cholesterol metabolism.</text>
</comment>
<comment type="similarity">
    <text evidence="4">Belongs to the ATP-dependent AMP-binding enzyme family.</text>
</comment>